<protein>
    <recommendedName>
        <fullName evidence="1">UvrABC system protein B</fullName>
        <shortName evidence="1">Protein UvrB</shortName>
    </recommendedName>
    <alternativeName>
        <fullName evidence="1">Excinuclease ABC subunit B</fullName>
    </alternativeName>
</protein>
<proteinExistence type="inferred from homology"/>
<organism>
    <name type="scientific">Micrococcus luteus (strain ATCC 4698 / DSM 20030 / JCM 1464 / CCM 169 / CCUG 5858 / IAM 1056 / NBRC 3333 / NCIMB 9278 / NCTC 2665 / VKM Ac-2230)</name>
    <name type="common">Micrococcus lysodeikticus</name>
    <dbReference type="NCBI Taxonomy" id="465515"/>
    <lineage>
        <taxon>Bacteria</taxon>
        <taxon>Bacillati</taxon>
        <taxon>Actinomycetota</taxon>
        <taxon>Actinomycetes</taxon>
        <taxon>Micrococcales</taxon>
        <taxon>Micrococcaceae</taxon>
        <taxon>Micrococcus</taxon>
    </lineage>
</organism>
<feature type="chain" id="PRO_0000138406" description="UvrABC system protein B">
    <location>
        <begin position="1"/>
        <end position="709"/>
    </location>
</feature>
<feature type="domain" description="Helicase ATP-binding" evidence="1">
    <location>
        <begin position="35"/>
        <end position="416"/>
    </location>
</feature>
<feature type="domain" description="Helicase C-terminal" evidence="1">
    <location>
        <begin position="438"/>
        <end position="604"/>
    </location>
</feature>
<feature type="domain" description="UVR" evidence="1">
    <location>
        <begin position="666"/>
        <end position="701"/>
    </location>
</feature>
<feature type="short sequence motif" description="Beta-hairpin">
    <location>
        <begin position="101"/>
        <end position="124"/>
    </location>
</feature>
<feature type="binding site" evidence="1">
    <location>
        <begin position="48"/>
        <end position="55"/>
    </location>
    <ligand>
        <name>ATP</name>
        <dbReference type="ChEBI" id="CHEBI:30616"/>
    </ligand>
</feature>
<feature type="sequence conflict" description="In Ref. 1; CAA31090." evidence="2" ref="1">
    <original>I</original>
    <variation>Y</variation>
    <location>
        <position position="355"/>
    </location>
</feature>
<feature type="sequence conflict" description="In Ref. 1; CAA31090." evidence="2" ref="1">
    <original>V</original>
    <variation>L</variation>
    <location>
        <position position="370"/>
    </location>
</feature>
<feature type="sequence conflict" description="In Ref. 1; CAA31090." evidence="2" ref="1">
    <original>L</original>
    <variation>V</variation>
    <location>
        <position position="385"/>
    </location>
</feature>
<sequence>MSLAQKINRVVAPFEVISPYQPSGDQPKAIAELAERVEAGEKDVVLMGATGTGKSATTAWLVERLQRPTLVMVQNKTLAAQLANEFRELLPNNAVEYFVSYYDYYQPEAYVPQTDTFIEKDSSINEEVERLRHSATNALLTRRDVIVVATVSCIYGLGTPEEYIEQMVTLRRGAEMDRDVLLRRFVQMQYVRNDVDFHRGTFRVRGDTVEIIPMYEELAVRIEFFGDEIESIQTLHPLTGQVVREEEEMYIFPASHYVAGDERMGRAITTIEDELRERLQELESQDKLLEAQRLRMRTTYDLEMMQQMGYCNGIENYSRHIDGRPAGSAPHCLLDYFPDDFLLVVDESHVTIPQIGAMYEGDMSRKRTLVEHGFRLPSAMDNRPLKWDEFLERIGQTVYLSATPGAYELGQADGYVEQIIRPTGLVDPQVVVKPTEGQIDDLLEQIRVRTAKDERVLVTTLTKRMAEDLTDYLLEAGVKVEYLHSDVDTLRRVELLRELRKGTFDVLVGINLLREGLDLPEVSLVAILDADKEGFLRSTTSLIQTIGRAARNVSGEVHMYAGNVTDSMRRAIEETERRRAVQIAYNEEHGIDPQPLRKRIADITDQLAREDADTADFLKGMGGVKSGFDFGMGHRGLSSLDRAPATGEGAAAPAVDPASLPAKDLADLIEQMSQQMHQAAADLQFELAARLRDEVGELKKELRQMKREQ</sequence>
<name>UVRB_MICLC</name>
<evidence type="ECO:0000255" key="1">
    <source>
        <dbReference type="HAMAP-Rule" id="MF_00204"/>
    </source>
</evidence>
<evidence type="ECO:0000305" key="2"/>
<keyword id="KW-0067">ATP-binding</keyword>
<keyword id="KW-0963">Cytoplasm</keyword>
<keyword id="KW-0227">DNA damage</keyword>
<keyword id="KW-0228">DNA excision</keyword>
<keyword id="KW-0234">DNA repair</keyword>
<keyword id="KW-0267">Excision nuclease</keyword>
<keyword id="KW-0547">Nucleotide-binding</keyword>
<keyword id="KW-1185">Reference proteome</keyword>
<keyword id="KW-0742">SOS response</keyword>
<comment type="function">
    <text evidence="1">The UvrABC repair system catalyzes the recognition and processing of DNA lesions. A damage recognition complex composed of 2 UvrA and 2 UvrB subunits scans DNA for abnormalities. Upon binding of the UvrA(2)B(2) complex to a putative damaged site, the DNA wraps around one UvrB monomer. DNA wrap is dependent on ATP binding by UvrB and probably causes local melting of the DNA helix, facilitating insertion of UvrB beta-hairpin between the DNA strands. Then UvrB probes one DNA strand for the presence of a lesion. If a lesion is found the UvrA subunits dissociate and the UvrB-DNA preincision complex is formed. This complex is subsequently bound by UvrC and the second UvrB is released. If no lesion is found, the DNA wraps around the other UvrB subunit that will check the other stand for damage.</text>
</comment>
<comment type="subunit">
    <text evidence="1">Forms a heterotetramer with UvrA during the search for lesions. Interacts with UvrC in an incision complex.</text>
</comment>
<comment type="subcellular location">
    <subcellularLocation>
        <location evidence="1">Cytoplasm</location>
    </subcellularLocation>
</comment>
<comment type="domain">
    <text evidence="1">The beta-hairpin motif is involved in DNA binding.</text>
</comment>
<comment type="similarity">
    <text evidence="1">Belongs to the UvrB family.</text>
</comment>
<gene>
    <name evidence="1" type="primary">uvrB</name>
    <name type="ordered locus">Mlut_11190</name>
</gene>
<dbReference type="EMBL" id="X12578">
    <property type="protein sequence ID" value="CAA31090.1"/>
    <property type="molecule type" value="Genomic_DNA"/>
</dbReference>
<dbReference type="EMBL" id="CP001628">
    <property type="protein sequence ID" value="ACS30625.1"/>
    <property type="molecule type" value="Genomic_DNA"/>
</dbReference>
<dbReference type="PIR" id="S03812">
    <property type="entry name" value="S03812"/>
</dbReference>
<dbReference type="RefSeq" id="WP_010078734.1">
    <property type="nucleotide sequence ID" value="NC_012803.1"/>
</dbReference>
<dbReference type="SMR" id="P10125"/>
<dbReference type="STRING" id="465515.Mlut_11190"/>
<dbReference type="EnsemblBacteria" id="ACS30625">
    <property type="protein sequence ID" value="ACS30625"/>
    <property type="gene ID" value="Mlut_11190"/>
</dbReference>
<dbReference type="GeneID" id="93345276"/>
<dbReference type="KEGG" id="mlu:Mlut_11190"/>
<dbReference type="PATRIC" id="fig|465515.4.peg.1061"/>
<dbReference type="eggNOG" id="COG0556">
    <property type="taxonomic scope" value="Bacteria"/>
</dbReference>
<dbReference type="HOGENOM" id="CLU_009621_2_1_11"/>
<dbReference type="Proteomes" id="UP000000738">
    <property type="component" value="Chromosome"/>
</dbReference>
<dbReference type="GO" id="GO:0005737">
    <property type="term" value="C:cytoplasm"/>
    <property type="evidence" value="ECO:0007669"/>
    <property type="project" value="UniProtKB-SubCell"/>
</dbReference>
<dbReference type="GO" id="GO:0009380">
    <property type="term" value="C:excinuclease repair complex"/>
    <property type="evidence" value="ECO:0007669"/>
    <property type="project" value="InterPro"/>
</dbReference>
<dbReference type="GO" id="GO:0005524">
    <property type="term" value="F:ATP binding"/>
    <property type="evidence" value="ECO:0007669"/>
    <property type="project" value="UniProtKB-UniRule"/>
</dbReference>
<dbReference type="GO" id="GO:0016887">
    <property type="term" value="F:ATP hydrolysis activity"/>
    <property type="evidence" value="ECO:0007669"/>
    <property type="project" value="InterPro"/>
</dbReference>
<dbReference type="GO" id="GO:0003677">
    <property type="term" value="F:DNA binding"/>
    <property type="evidence" value="ECO:0007669"/>
    <property type="project" value="UniProtKB-UniRule"/>
</dbReference>
<dbReference type="GO" id="GO:0009381">
    <property type="term" value="F:excinuclease ABC activity"/>
    <property type="evidence" value="ECO:0007669"/>
    <property type="project" value="UniProtKB-UniRule"/>
</dbReference>
<dbReference type="GO" id="GO:0006289">
    <property type="term" value="P:nucleotide-excision repair"/>
    <property type="evidence" value="ECO:0007669"/>
    <property type="project" value="UniProtKB-UniRule"/>
</dbReference>
<dbReference type="GO" id="GO:0009432">
    <property type="term" value="P:SOS response"/>
    <property type="evidence" value="ECO:0007669"/>
    <property type="project" value="UniProtKB-UniRule"/>
</dbReference>
<dbReference type="CDD" id="cd17916">
    <property type="entry name" value="DEXHc_UvrB"/>
    <property type="match status" value="1"/>
</dbReference>
<dbReference type="CDD" id="cd18790">
    <property type="entry name" value="SF2_C_UvrB"/>
    <property type="match status" value="1"/>
</dbReference>
<dbReference type="FunFam" id="4.10.860.10:FF:000009">
    <property type="entry name" value="UvrABC system protein B"/>
    <property type="match status" value="1"/>
</dbReference>
<dbReference type="Gene3D" id="3.40.50.300">
    <property type="entry name" value="P-loop containing nucleotide triphosphate hydrolases"/>
    <property type="match status" value="3"/>
</dbReference>
<dbReference type="Gene3D" id="4.10.860.10">
    <property type="entry name" value="UVR domain"/>
    <property type="match status" value="1"/>
</dbReference>
<dbReference type="HAMAP" id="MF_00204">
    <property type="entry name" value="UvrB"/>
    <property type="match status" value="1"/>
</dbReference>
<dbReference type="InterPro" id="IPR006935">
    <property type="entry name" value="Helicase/UvrB_N"/>
</dbReference>
<dbReference type="InterPro" id="IPR014001">
    <property type="entry name" value="Helicase_ATP-bd"/>
</dbReference>
<dbReference type="InterPro" id="IPR001650">
    <property type="entry name" value="Helicase_C-like"/>
</dbReference>
<dbReference type="InterPro" id="IPR027417">
    <property type="entry name" value="P-loop_NTPase"/>
</dbReference>
<dbReference type="InterPro" id="IPR001943">
    <property type="entry name" value="UVR_dom"/>
</dbReference>
<dbReference type="InterPro" id="IPR036876">
    <property type="entry name" value="UVR_dom_sf"/>
</dbReference>
<dbReference type="InterPro" id="IPR004807">
    <property type="entry name" value="UvrB"/>
</dbReference>
<dbReference type="InterPro" id="IPR041471">
    <property type="entry name" value="UvrB_inter"/>
</dbReference>
<dbReference type="InterPro" id="IPR024759">
    <property type="entry name" value="UvrB_YAD/RRR_dom"/>
</dbReference>
<dbReference type="NCBIfam" id="NF003673">
    <property type="entry name" value="PRK05298.1"/>
    <property type="match status" value="1"/>
</dbReference>
<dbReference type="NCBIfam" id="TIGR00631">
    <property type="entry name" value="uvrb"/>
    <property type="match status" value="1"/>
</dbReference>
<dbReference type="PANTHER" id="PTHR24029">
    <property type="entry name" value="UVRABC SYSTEM PROTEIN B"/>
    <property type="match status" value="1"/>
</dbReference>
<dbReference type="PANTHER" id="PTHR24029:SF0">
    <property type="entry name" value="UVRABC SYSTEM PROTEIN B"/>
    <property type="match status" value="1"/>
</dbReference>
<dbReference type="Pfam" id="PF00271">
    <property type="entry name" value="Helicase_C"/>
    <property type="match status" value="1"/>
</dbReference>
<dbReference type="Pfam" id="PF04851">
    <property type="entry name" value="ResIII"/>
    <property type="match status" value="1"/>
</dbReference>
<dbReference type="Pfam" id="PF02151">
    <property type="entry name" value="UVR"/>
    <property type="match status" value="1"/>
</dbReference>
<dbReference type="Pfam" id="PF12344">
    <property type="entry name" value="UvrB"/>
    <property type="match status" value="1"/>
</dbReference>
<dbReference type="Pfam" id="PF17757">
    <property type="entry name" value="UvrB_inter"/>
    <property type="match status" value="1"/>
</dbReference>
<dbReference type="SMART" id="SM00487">
    <property type="entry name" value="DEXDc"/>
    <property type="match status" value="1"/>
</dbReference>
<dbReference type="SMART" id="SM00490">
    <property type="entry name" value="HELICc"/>
    <property type="match status" value="1"/>
</dbReference>
<dbReference type="SUPFAM" id="SSF46600">
    <property type="entry name" value="C-terminal UvrC-binding domain of UvrB"/>
    <property type="match status" value="1"/>
</dbReference>
<dbReference type="SUPFAM" id="SSF52540">
    <property type="entry name" value="P-loop containing nucleoside triphosphate hydrolases"/>
    <property type="match status" value="2"/>
</dbReference>
<dbReference type="PROSITE" id="PS51192">
    <property type="entry name" value="HELICASE_ATP_BIND_1"/>
    <property type="match status" value="1"/>
</dbReference>
<dbReference type="PROSITE" id="PS51194">
    <property type="entry name" value="HELICASE_CTER"/>
    <property type="match status" value="1"/>
</dbReference>
<dbReference type="PROSITE" id="PS50151">
    <property type="entry name" value="UVR"/>
    <property type="match status" value="1"/>
</dbReference>
<reference key="1">
    <citation type="journal article" date="1988" name="Mol. Gen. Genet.">
        <title>Evidence for a Micrococcus luteus gene homologous to uvrB of Escherichia coli.</title>
        <authorList>
            <person name="Shiota S."/>
            <person name="Nakayama H."/>
        </authorList>
    </citation>
    <scope>NUCLEOTIDE SEQUENCE [GENOMIC DNA]</scope>
</reference>
<reference key="2">
    <citation type="submission" date="1989-02" db="EMBL/GenBank/DDBJ databases">
        <authorList>
            <person name="Nakayama H."/>
        </authorList>
    </citation>
    <scope>SEQUENCE REVISION</scope>
</reference>
<reference key="3">
    <citation type="journal article" date="2010" name="J. Bacteriol.">
        <title>Genome sequence of the Fleming strain of Micrococcus luteus, a simple free-living actinobacterium.</title>
        <authorList>
            <person name="Young M."/>
            <person name="Artsatbanov V."/>
            <person name="Beller H.R."/>
            <person name="Chandra G."/>
            <person name="Chater K.F."/>
            <person name="Dover L.G."/>
            <person name="Goh E.B."/>
            <person name="Kahan T."/>
            <person name="Kaprelyants A.S."/>
            <person name="Kyrpides N."/>
            <person name="Lapidus A."/>
            <person name="Lowry S.R."/>
            <person name="Lykidis A."/>
            <person name="Mahillon J."/>
            <person name="Markowitz V."/>
            <person name="Mavromatis K."/>
            <person name="Mukamolova G.V."/>
            <person name="Oren A."/>
            <person name="Rokem J.S."/>
            <person name="Smith M.C."/>
            <person name="Young D.I."/>
            <person name="Greenblatt C.L."/>
        </authorList>
    </citation>
    <scope>NUCLEOTIDE SEQUENCE [LARGE SCALE GENOMIC DNA]</scope>
    <source>
        <strain>ATCC 4698 / DSM 20030 / JCM 1464 / CCM 169 / CCUG 5858 / IAM 1056 / NBRC 3333 / NCIMB 9278 / NCTC 2665 / VKM Ac-2230</strain>
    </source>
</reference>
<accession>P10125</accession>
<accession>C5CBM8</accession>